<reference key="1">
    <citation type="submission" date="2007-03" db="EMBL/GenBank/DDBJ databases">
        <authorList>
            <person name="Heidelberg J."/>
        </authorList>
    </citation>
    <scope>NUCLEOTIDE SEQUENCE [LARGE SCALE GENOMIC DNA]</scope>
    <source>
        <strain>ATCC 39541 / Classical Ogawa 395 / O395</strain>
    </source>
</reference>
<reference key="2">
    <citation type="journal article" date="2008" name="PLoS ONE">
        <title>A recalibrated molecular clock and independent origins for the cholera pandemic clones.</title>
        <authorList>
            <person name="Feng L."/>
            <person name="Reeves P.R."/>
            <person name="Lan R."/>
            <person name="Ren Y."/>
            <person name="Gao C."/>
            <person name="Zhou Z."/>
            <person name="Ren Y."/>
            <person name="Cheng J."/>
            <person name="Wang W."/>
            <person name="Wang J."/>
            <person name="Qian W."/>
            <person name="Li D."/>
            <person name="Wang L."/>
        </authorList>
    </citation>
    <scope>NUCLEOTIDE SEQUENCE [LARGE SCALE GENOMIC DNA]</scope>
    <source>
        <strain>ATCC 39541 / Classical Ogawa 395 / O395</strain>
    </source>
</reference>
<feature type="chain" id="PRO_1000071513" description="DNA mismatch repair protein MutL">
    <location>
        <begin position="1"/>
        <end position="653"/>
    </location>
</feature>
<feature type="region of interest" description="Disordered" evidence="2">
    <location>
        <begin position="375"/>
        <end position="425"/>
    </location>
</feature>
<feature type="compositionally biased region" description="Basic and acidic residues" evidence="2">
    <location>
        <begin position="380"/>
        <end position="389"/>
    </location>
</feature>
<proteinExistence type="inferred from homology"/>
<organism>
    <name type="scientific">Vibrio cholerae serotype O1 (strain ATCC 39541 / Classical Ogawa 395 / O395)</name>
    <dbReference type="NCBI Taxonomy" id="345073"/>
    <lineage>
        <taxon>Bacteria</taxon>
        <taxon>Pseudomonadati</taxon>
        <taxon>Pseudomonadota</taxon>
        <taxon>Gammaproteobacteria</taxon>
        <taxon>Vibrionales</taxon>
        <taxon>Vibrionaceae</taxon>
        <taxon>Vibrio</taxon>
    </lineage>
</organism>
<name>MUTL_VIBC3</name>
<protein>
    <recommendedName>
        <fullName evidence="1">DNA mismatch repair protein MutL</fullName>
    </recommendedName>
</protein>
<gene>
    <name evidence="1" type="primary">mutL</name>
    <name type="ordered locus">VC0395_A2756</name>
    <name type="ordered locus">VC395_0388</name>
</gene>
<accession>A5F3L5</accession>
<accession>C3M403</accession>
<dbReference type="EMBL" id="CP000627">
    <property type="protein sequence ID" value="ABQ21487.1"/>
    <property type="molecule type" value="Genomic_DNA"/>
</dbReference>
<dbReference type="EMBL" id="CP001235">
    <property type="protein sequence ID" value="ACP08411.1"/>
    <property type="molecule type" value="Genomic_DNA"/>
</dbReference>
<dbReference type="RefSeq" id="WP_000155485.1">
    <property type="nucleotide sequence ID" value="NZ_JAACZH010000038.1"/>
</dbReference>
<dbReference type="SMR" id="A5F3L5"/>
<dbReference type="KEGG" id="vco:VC0395_A2756"/>
<dbReference type="KEGG" id="vcr:VC395_0388"/>
<dbReference type="PATRIC" id="fig|345073.21.peg.377"/>
<dbReference type="eggNOG" id="COG0323">
    <property type="taxonomic scope" value="Bacteria"/>
</dbReference>
<dbReference type="HOGENOM" id="CLU_004131_5_1_6"/>
<dbReference type="OrthoDB" id="9763467at2"/>
<dbReference type="Proteomes" id="UP000000249">
    <property type="component" value="Chromosome 2"/>
</dbReference>
<dbReference type="GO" id="GO:0032300">
    <property type="term" value="C:mismatch repair complex"/>
    <property type="evidence" value="ECO:0007669"/>
    <property type="project" value="InterPro"/>
</dbReference>
<dbReference type="GO" id="GO:0005524">
    <property type="term" value="F:ATP binding"/>
    <property type="evidence" value="ECO:0007669"/>
    <property type="project" value="InterPro"/>
</dbReference>
<dbReference type="GO" id="GO:0016887">
    <property type="term" value="F:ATP hydrolysis activity"/>
    <property type="evidence" value="ECO:0007669"/>
    <property type="project" value="InterPro"/>
</dbReference>
<dbReference type="GO" id="GO:0140664">
    <property type="term" value="F:ATP-dependent DNA damage sensor activity"/>
    <property type="evidence" value="ECO:0007669"/>
    <property type="project" value="InterPro"/>
</dbReference>
<dbReference type="GO" id="GO:0030983">
    <property type="term" value="F:mismatched DNA binding"/>
    <property type="evidence" value="ECO:0007669"/>
    <property type="project" value="InterPro"/>
</dbReference>
<dbReference type="GO" id="GO:0006298">
    <property type="term" value="P:mismatch repair"/>
    <property type="evidence" value="ECO:0007669"/>
    <property type="project" value="UniProtKB-UniRule"/>
</dbReference>
<dbReference type="CDD" id="cd16926">
    <property type="entry name" value="HATPase_MutL-MLH-PMS-like"/>
    <property type="match status" value="1"/>
</dbReference>
<dbReference type="CDD" id="cd03482">
    <property type="entry name" value="MutL_Trans_MutL"/>
    <property type="match status" value="1"/>
</dbReference>
<dbReference type="FunFam" id="3.30.230.10:FF:000013">
    <property type="entry name" value="DNA mismatch repair endonuclease MutL"/>
    <property type="match status" value="1"/>
</dbReference>
<dbReference type="FunFam" id="3.30.565.10:FF:000003">
    <property type="entry name" value="DNA mismatch repair endonuclease MutL"/>
    <property type="match status" value="1"/>
</dbReference>
<dbReference type="Gene3D" id="3.30.230.10">
    <property type="match status" value="1"/>
</dbReference>
<dbReference type="Gene3D" id="3.30.565.10">
    <property type="entry name" value="Histidine kinase-like ATPase, C-terminal domain"/>
    <property type="match status" value="1"/>
</dbReference>
<dbReference type="Gene3D" id="3.30.1540.20">
    <property type="entry name" value="MutL, C-terminal domain, dimerisation subdomain"/>
    <property type="match status" value="1"/>
</dbReference>
<dbReference type="Gene3D" id="3.30.1370.100">
    <property type="entry name" value="MutL, C-terminal domain, regulatory subdomain"/>
    <property type="match status" value="1"/>
</dbReference>
<dbReference type="HAMAP" id="MF_00149">
    <property type="entry name" value="DNA_mis_repair"/>
    <property type="match status" value="1"/>
</dbReference>
<dbReference type="InterPro" id="IPR014762">
    <property type="entry name" value="DNA_mismatch_repair_CS"/>
</dbReference>
<dbReference type="InterPro" id="IPR020667">
    <property type="entry name" value="DNA_mismatch_repair_MutL"/>
</dbReference>
<dbReference type="InterPro" id="IPR013507">
    <property type="entry name" value="DNA_mismatch_S5_2-like"/>
</dbReference>
<dbReference type="InterPro" id="IPR036890">
    <property type="entry name" value="HATPase_C_sf"/>
</dbReference>
<dbReference type="InterPro" id="IPR002099">
    <property type="entry name" value="MutL/Mlh/PMS"/>
</dbReference>
<dbReference type="InterPro" id="IPR038973">
    <property type="entry name" value="MutL/Mlh/Pms-like"/>
</dbReference>
<dbReference type="InterPro" id="IPR014790">
    <property type="entry name" value="MutL_C"/>
</dbReference>
<dbReference type="InterPro" id="IPR042120">
    <property type="entry name" value="MutL_C_dimsub"/>
</dbReference>
<dbReference type="InterPro" id="IPR042121">
    <property type="entry name" value="MutL_C_regsub"/>
</dbReference>
<dbReference type="InterPro" id="IPR037198">
    <property type="entry name" value="MutL_C_sf"/>
</dbReference>
<dbReference type="InterPro" id="IPR020568">
    <property type="entry name" value="Ribosomal_Su5_D2-typ_SF"/>
</dbReference>
<dbReference type="InterPro" id="IPR014721">
    <property type="entry name" value="Ribsml_uS5_D2-typ_fold_subgr"/>
</dbReference>
<dbReference type="NCBIfam" id="TIGR00585">
    <property type="entry name" value="mutl"/>
    <property type="match status" value="1"/>
</dbReference>
<dbReference type="NCBIfam" id="NF000948">
    <property type="entry name" value="PRK00095.1-1"/>
    <property type="match status" value="1"/>
</dbReference>
<dbReference type="PANTHER" id="PTHR10073">
    <property type="entry name" value="DNA MISMATCH REPAIR PROTEIN MLH, PMS, MUTL"/>
    <property type="match status" value="1"/>
</dbReference>
<dbReference type="PANTHER" id="PTHR10073:SF12">
    <property type="entry name" value="DNA MISMATCH REPAIR PROTEIN MLH1"/>
    <property type="match status" value="1"/>
</dbReference>
<dbReference type="Pfam" id="PF01119">
    <property type="entry name" value="DNA_mis_repair"/>
    <property type="match status" value="1"/>
</dbReference>
<dbReference type="Pfam" id="PF13589">
    <property type="entry name" value="HATPase_c_3"/>
    <property type="match status" value="1"/>
</dbReference>
<dbReference type="Pfam" id="PF08676">
    <property type="entry name" value="MutL_C"/>
    <property type="match status" value="1"/>
</dbReference>
<dbReference type="SMART" id="SM01340">
    <property type="entry name" value="DNA_mis_repair"/>
    <property type="match status" value="1"/>
</dbReference>
<dbReference type="SMART" id="SM00853">
    <property type="entry name" value="MutL_C"/>
    <property type="match status" value="1"/>
</dbReference>
<dbReference type="SUPFAM" id="SSF55874">
    <property type="entry name" value="ATPase domain of HSP90 chaperone/DNA topoisomerase II/histidine kinase"/>
    <property type="match status" value="1"/>
</dbReference>
<dbReference type="SUPFAM" id="SSF118116">
    <property type="entry name" value="DNA mismatch repair protein MutL"/>
    <property type="match status" value="1"/>
</dbReference>
<dbReference type="SUPFAM" id="SSF54211">
    <property type="entry name" value="Ribosomal protein S5 domain 2-like"/>
    <property type="match status" value="1"/>
</dbReference>
<dbReference type="PROSITE" id="PS00058">
    <property type="entry name" value="DNA_MISMATCH_REPAIR_1"/>
    <property type="match status" value="1"/>
</dbReference>
<keyword id="KW-0227">DNA damage</keyword>
<keyword id="KW-0234">DNA repair</keyword>
<evidence type="ECO:0000255" key="1">
    <source>
        <dbReference type="HAMAP-Rule" id="MF_00149"/>
    </source>
</evidence>
<evidence type="ECO:0000256" key="2">
    <source>
        <dbReference type="SAM" id="MobiDB-lite"/>
    </source>
</evidence>
<sequence>MTIRILPARLANQIAAGEVVERPASVVKELVENSLDAGATRIDIDLEKGGAKLIRIRDNGSGIDKDELGLALSRHATSKIHTLDDLEAIMSLGFRGEALASISSVSRLTLTSRTVAQEEAWSAYSEGRDMAVKLQPAAHPVGTTVEVLDLFFNTPARRKFLRTEKTEFTHIDELLKRIALSRFDVSFTLRHNGKIVRQYRAATTLPQQEKRLAAVCGNPFVQHMLRIELEHQGLKLHGWITTPEGARQQSDLQYCYVNGRMMRDKLINHAIRQSYETSLRVDQFATYVLFIELDPHQVDVNVHPAKHEVRFHQARLVHDFIYQALSSALVQGAQVMAPTINEGAFHLPHCAEEVNPPVVPMIDTTQQERVWQAVQNTPDYPRKAPRDNDRDESDNPQVRERAVSNPWVASPKTASTGKERYGSASVSKKEAAVYQTLMQTPDLSDEEPSTASTIVSSIEAVKANIAIEKLGKAIQVVAGQYLLMSSPQGCVLISLYQAQQLKLRGLLNAQHGALKAQPLLVPLALKLNESEWQVAQRHSSALLQLGIELKSRTNHSIMVMAVPQPLRQQNLQQLLPDLLSYAASCSESQALSHQALADWLTQRIVVEKRDYTLAEAIGLIAELEQLWQGNLPLQDPHFITLVDFSASITALHS</sequence>
<comment type="function">
    <text evidence="1">This protein is involved in the repair of mismatches in DNA. It is required for dam-dependent methyl-directed DNA mismatch repair. May act as a 'molecular matchmaker', a protein that promotes the formation of a stable complex between two or more DNA-binding proteins in an ATP-dependent manner without itself being part of a final effector complex.</text>
</comment>
<comment type="similarity">
    <text evidence="1">Belongs to the DNA mismatch repair MutL/HexB family.</text>
</comment>